<name>CREB_ECOLI</name>
<feature type="chain" id="PRO_0000081082" description="Transcriptional regulatory protein CreB">
    <location>
        <begin position="1"/>
        <end position="229"/>
    </location>
</feature>
<feature type="domain" description="Response regulatory" evidence="1">
    <location>
        <begin position="5"/>
        <end position="119"/>
    </location>
</feature>
<feature type="DNA-binding region" description="OmpR/PhoB-type" evidence="2">
    <location>
        <begin position="129"/>
        <end position="228"/>
    </location>
</feature>
<feature type="modified residue" description="4-aspartylphosphate" evidence="1">
    <location>
        <position position="54"/>
    </location>
</feature>
<comment type="function">
    <text>Member of the two-component regulatory system CreC/CreB involved in catabolic regulation.</text>
</comment>
<comment type="interaction">
    <interactant intactId="EBI-1131567">
        <id>P08368</id>
    </interactant>
    <interactant intactId="EBI-1131567">
        <id>P08368</id>
        <label>creB</label>
    </interactant>
    <organismsDiffer>false</organismsDiffer>
    <experiments>2</experiments>
</comment>
<comment type="subcellular location">
    <subcellularLocation>
        <location evidence="4">Cytoplasm</location>
    </subcellularLocation>
</comment>
<comment type="PTM">
    <text evidence="3">Phosphorylated by CreC.</text>
</comment>
<gene>
    <name type="primary">creB</name>
    <name type="synonym">yjjE</name>
    <name type="ordered locus">b4398</name>
    <name type="ordered locus">JW4361</name>
</gene>
<keyword id="KW-0963">Cytoplasm</keyword>
<keyword id="KW-0238">DNA-binding</keyword>
<keyword id="KW-0597">Phosphoprotein</keyword>
<keyword id="KW-1185">Reference proteome</keyword>
<keyword id="KW-0804">Transcription</keyword>
<keyword id="KW-0805">Transcription regulation</keyword>
<keyword id="KW-0902">Two-component regulatory system</keyword>
<dbReference type="EMBL" id="M13608">
    <property type="protein sequence ID" value="AAA24374.1"/>
    <property type="molecule type" value="Genomic_DNA"/>
</dbReference>
<dbReference type="EMBL" id="U14003">
    <property type="protein sequence ID" value="AAA97294.1"/>
    <property type="molecule type" value="Genomic_DNA"/>
</dbReference>
<dbReference type="EMBL" id="U00096">
    <property type="protein sequence ID" value="AAC77351.1"/>
    <property type="molecule type" value="Genomic_DNA"/>
</dbReference>
<dbReference type="EMBL" id="AP009048">
    <property type="protein sequence ID" value="BAE78387.1"/>
    <property type="molecule type" value="Genomic_DNA"/>
</dbReference>
<dbReference type="PIR" id="B25038">
    <property type="entry name" value="QQECFJ"/>
</dbReference>
<dbReference type="RefSeq" id="NP_418815.1">
    <property type="nucleotide sequence ID" value="NC_000913.3"/>
</dbReference>
<dbReference type="RefSeq" id="WP_001188654.1">
    <property type="nucleotide sequence ID" value="NZ_LN832404.1"/>
</dbReference>
<dbReference type="SMR" id="P08368"/>
<dbReference type="BioGRID" id="4263252">
    <property type="interactions" value="87"/>
</dbReference>
<dbReference type="BioGRID" id="853198">
    <property type="interactions" value="4"/>
</dbReference>
<dbReference type="DIP" id="DIP-9318N"/>
<dbReference type="FunCoup" id="P08368">
    <property type="interactions" value="221"/>
</dbReference>
<dbReference type="IntAct" id="P08368">
    <property type="interactions" value="4"/>
</dbReference>
<dbReference type="STRING" id="511145.b4398"/>
<dbReference type="PaxDb" id="511145-b4398"/>
<dbReference type="EnsemblBacteria" id="AAC77351">
    <property type="protein sequence ID" value="AAC77351"/>
    <property type="gene ID" value="b4398"/>
</dbReference>
<dbReference type="GeneID" id="948922"/>
<dbReference type="KEGG" id="ecj:JW4361"/>
<dbReference type="KEGG" id="eco:b4398"/>
<dbReference type="KEGG" id="ecoc:C3026_23765"/>
<dbReference type="PATRIC" id="fig|1411691.4.peg.2286"/>
<dbReference type="EchoBASE" id="EB1201"/>
<dbReference type="eggNOG" id="COG0745">
    <property type="taxonomic scope" value="Bacteria"/>
</dbReference>
<dbReference type="HOGENOM" id="CLU_000445_30_4_6"/>
<dbReference type="InParanoid" id="P08368"/>
<dbReference type="OMA" id="YSYSPEH"/>
<dbReference type="OrthoDB" id="9802426at2"/>
<dbReference type="PhylomeDB" id="P08368"/>
<dbReference type="BioCyc" id="EcoCyc:CREB-MONOMER"/>
<dbReference type="PRO" id="PR:P08368"/>
<dbReference type="Proteomes" id="UP000000625">
    <property type="component" value="Chromosome"/>
</dbReference>
<dbReference type="GO" id="GO:0005829">
    <property type="term" value="C:cytosol"/>
    <property type="evidence" value="ECO:0000318"/>
    <property type="project" value="GO_Central"/>
</dbReference>
<dbReference type="GO" id="GO:0032993">
    <property type="term" value="C:protein-DNA complex"/>
    <property type="evidence" value="ECO:0000318"/>
    <property type="project" value="GO_Central"/>
</dbReference>
<dbReference type="GO" id="GO:0000987">
    <property type="term" value="F:cis-regulatory region sequence-specific DNA binding"/>
    <property type="evidence" value="ECO:0000314"/>
    <property type="project" value="EcoCyc"/>
</dbReference>
<dbReference type="GO" id="GO:0042802">
    <property type="term" value="F:identical protein binding"/>
    <property type="evidence" value="ECO:0000353"/>
    <property type="project" value="IntAct"/>
</dbReference>
<dbReference type="GO" id="GO:0000156">
    <property type="term" value="F:phosphorelay response regulator activity"/>
    <property type="evidence" value="ECO:0000318"/>
    <property type="project" value="GO_Central"/>
</dbReference>
<dbReference type="GO" id="GO:0000976">
    <property type="term" value="F:transcription cis-regulatory region binding"/>
    <property type="evidence" value="ECO:0000318"/>
    <property type="project" value="GO_Central"/>
</dbReference>
<dbReference type="GO" id="GO:0045893">
    <property type="term" value="P:positive regulation of DNA-templated transcription"/>
    <property type="evidence" value="ECO:0000315"/>
    <property type="project" value="EcoCyc"/>
</dbReference>
<dbReference type="GO" id="GO:0006355">
    <property type="term" value="P:regulation of DNA-templated transcription"/>
    <property type="evidence" value="ECO:0000318"/>
    <property type="project" value="GO_Central"/>
</dbReference>
<dbReference type="CDD" id="cd17574">
    <property type="entry name" value="REC_OmpR"/>
    <property type="match status" value="1"/>
</dbReference>
<dbReference type="CDD" id="cd00383">
    <property type="entry name" value="trans_reg_C"/>
    <property type="match status" value="1"/>
</dbReference>
<dbReference type="FunFam" id="1.10.10.10:FF:000254">
    <property type="entry name" value="Two-component system response regulator CreB"/>
    <property type="match status" value="1"/>
</dbReference>
<dbReference type="FunFam" id="3.40.50.2300:FF:000021">
    <property type="entry name" value="Two-component system response regulator KdpE"/>
    <property type="match status" value="1"/>
</dbReference>
<dbReference type="Gene3D" id="3.40.50.2300">
    <property type="match status" value="1"/>
</dbReference>
<dbReference type="Gene3D" id="6.10.250.690">
    <property type="match status" value="1"/>
</dbReference>
<dbReference type="Gene3D" id="1.10.10.10">
    <property type="entry name" value="Winged helix-like DNA-binding domain superfamily/Winged helix DNA-binding domain"/>
    <property type="match status" value="1"/>
</dbReference>
<dbReference type="InterPro" id="IPR011006">
    <property type="entry name" value="CheY-like_superfamily"/>
</dbReference>
<dbReference type="InterPro" id="IPR001867">
    <property type="entry name" value="OmpR/PhoB-type_DNA-bd"/>
</dbReference>
<dbReference type="InterPro" id="IPR016032">
    <property type="entry name" value="Sig_transdc_resp-reg_C-effctor"/>
</dbReference>
<dbReference type="InterPro" id="IPR001789">
    <property type="entry name" value="Sig_transdc_resp-reg_receiver"/>
</dbReference>
<dbReference type="InterPro" id="IPR039420">
    <property type="entry name" value="WalR-like"/>
</dbReference>
<dbReference type="InterPro" id="IPR036388">
    <property type="entry name" value="WH-like_DNA-bd_sf"/>
</dbReference>
<dbReference type="NCBIfam" id="NF008296">
    <property type="entry name" value="PRK11083.1"/>
    <property type="match status" value="1"/>
</dbReference>
<dbReference type="PANTHER" id="PTHR48111">
    <property type="entry name" value="REGULATOR OF RPOS"/>
    <property type="match status" value="1"/>
</dbReference>
<dbReference type="PANTHER" id="PTHR48111:SF6">
    <property type="entry name" value="TRANSCRIPTIONAL REGULATORY PROTEIN CREB"/>
    <property type="match status" value="1"/>
</dbReference>
<dbReference type="Pfam" id="PF00072">
    <property type="entry name" value="Response_reg"/>
    <property type="match status" value="1"/>
</dbReference>
<dbReference type="Pfam" id="PF00486">
    <property type="entry name" value="Trans_reg_C"/>
    <property type="match status" value="1"/>
</dbReference>
<dbReference type="SMART" id="SM00448">
    <property type="entry name" value="REC"/>
    <property type="match status" value="1"/>
</dbReference>
<dbReference type="SMART" id="SM00862">
    <property type="entry name" value="Trans_reg_C"/>
    <property type="match status" value="1"/>
</dbReference>
<dbReference type="SUPFAM" id="SSF46894">
    <property type="entry name" value="C-terminal effector domain of the bipartite response regulators"/>
    <property type="match status" value="1"/>
</dbReference>
<dbReference type="SUPFAM" id="SSF52172">
    <property type="entry name" value="CheY-like"/>
    <property type="match status" value="1"/>
</dbReference>
<dbReference type="PROSITE" id="PS51755">
    <property type="entry name" value="OMPR_PHOB"/>
    <property type="match status" value="1"/>
</dbReference>
<dbReference type="PROSITE" id="PS50110">
    <property type="entry name" value="RESPONSE_REGULATORY"/>
    <property type="match status" value="1"/>
</dbReference>
<accession>P08368</accession>
<accession>Q2M5R9</accession>
<reference key="1">
    <citation type="journal article" date="1986" name="J. Bacteriol.">
        <title>Nucleotide sequence of the phoM region of Escherichia coli: four open reading frames may constitute an operon.</title>
        <authorList>
            <person name="Amemura M."/>
            <person name="Makino K."/>
            <person name="Shinagawa H."/>
            <person name="Nakata A."/>
        </authorList>
    </citation>
    <scope>NUCLEOTIDE SEQUENCE [GENOMIC DNA]</scope>
</reference>
<reference key="2">
    <citation type="journal article" date="1995" name="Nucleic Acids Res.">
        <title>Analysis of the Escherichia coli genome VI: DNA sequence of the region from 92.8 through 100 minutes.</title>
        <authorList>
            <person name="Burland V.D."/>
            <person name="Plunkett G. III"/>
            <person name="Sofia H.J."/>
            <person name="Daniels D.L."/>
            <person name="Blattner F.R."/>
        </authorList>
    </citation>
    <scope>NUCLEOTIDE SEQUENCE [LARGE SCALE GENOMIC DNA]</scope>
    <source>
        <strain>K12 / MG1655 / ATCC 47076</strain>
    </source>
</reference>
<reference key="3">
    <citation type="journal article" date="1997" name="Science">
        <title>The complete genome sequence of Escherichia coli K-12.</title>
        <authorList>
            <person name="Blattner F.R."/>
            <person name="Plunkett G. III"/>
            <person name="Bloch C.A."/>
            <person name="Perna N.T."/>
            <person name="Burland V."/>
            <person name="Riley M."/>
            <person name="Collado-Vides J."/>
            <person name="Glasner J.D."/>
            <person name="Rode C.K."/>
            <person name="Mayhew G.F."/>
            <person name="Gregor J."/>
            <person name="Davis N.W."/>
            <person name="Kirkpatrick H.A."/>
            <person name="Goeden M.A."/>
            <person name="Rose D.J."/>
            <person name="Mau B."/>
            <person name="Shao Y."/>
        </authorList>
    </citation>
    <scope>NUCLEOTIDE SEQUENCE [LARGE SCALE GENOMIC DNA]</scope>
    <source>
        <strain>K12 / MG1655 / ATCC 47076</strain>
    </source>
</reference>
<reference key="4">
    <citation type="journal article" date="2006" name="Mol. Syst. Biol.">
        <title>Highly accurate genome sequences of Escherichia coli K-12 strains MG1655 and W3110.</title>
        <authorList>
            <person name="Hayashi K."/>
            <person name="Morooka N."/>
            <person name="Yamamoto Y."/>
            <person name="Fujita K."/>
            <person name="Isono K."/>
            <person name="Choi S."/>
            <person name="Ohtsubo E."/>
            <person name="Baba T."/>
            <person name="Wanner B.L."/>
            <person name="Mori H."/>
            <person name="Horiuchi T."/>
        </authorList>
    </citation>
    <scope>NUCLEOTIDE SEQUENCE [LARGE SCALE GENOMIC DNA]</scope>
    <source>
        <strain>K12 / W3110 / ATCC 27325 / DSM 5911</strain>
    </source>
</reference>
<reference key="5">
    <citation type="journal article" date="2005" name="J. Biol. Chem.">
        <title>Functional characterization in vitro of all two-component signal transduction systems from Escherichia coli.</title>
        <authorList>
            <person name="Yamamoto K."/>
            <person name="Hirao K."/>
            <person name="Oshima T."/>
            <person name="Aiba H."/>
            <person name="Utsumi R."/>
            <person name="Ishihama A."/>
        </authorList>
    </citation>
    <scope>PHOSPHORYLATION</scope>
    <source>
        <strain>K12 / W3110 / ATCC 27325 / DSM 5911</strain>
    </source>
</reference>
<proteinExistence type="evidence at protein level"/>
<organism>
    <name type="scientific">Escherichia coli (strain K12)</name>
    <dbReference type="NCBI Taxonomy" id="83333"/>
    <lineage>
        <taxon>Bacteria</taxon>
        <taxon>Pseudomonadati</taxon>
        <taxon>Pseudomonadota</taxon>
        <taxon>Gammaproteobacteria</taxon>
        <taxon>Enterobacterales</taxon>
        <taxon>Enterobacteriaceae</taxon>
        <taxon>Escherichia</taxon>
    </lineage>
</organism>
<sequence length="229" mass="26125">MQRETVWLVEDEQGIADTLVYMLQQEGFAVEVFERGLPVLDKARKQVPDVMILDVGLPDISGFELCRQLLALHPALPVLFLTARSEEVDRLLGLEIGADDYVAKPFSPREVCARVRTLLRRVKKFSTPSPVIRIGHFELNEPAAQISWFDTPLALTRYEFLLLKTLLKSPGRVWSRQQLMDSVWEDAQDTYDRTVDTHIKTLRAKLRAINPDLSPINTHRGMGYSLRGL</sequence>
<evidence type="ECO:0000255" key="1">
    <source>
        <dbReference type="PROSITE-ProRule" id="PRU00169"/>
    </source>
</evidence>
<evidence type="ECO:0000255" key="2">
    <source>
        <dbReference type="PROSITE-ProRule" id="PRU01091"/>
    </source>
</evidence>
<evidence type="ECO:0000269" key="3">
    <source>
    </source>
</evidence>
<evidence type="ECO:0000305" key="4"/>
<protein>
    <recommendedName>
        <fullName>Transcriptional regulatory protein CreB</fullName>
    </recommendedName>
</protein>